<sequence length="710" mass="81554">MIKGKRSFPKRQNNVRVLNSSRVEEFDISDHNQSIDSINELSAYEVLSLRKKTEDGIKSNLNEERVASSLTSRAEDNKPCRDFVKSDRNVLASDFLSKYGEETDEMNKTKKKQKKIMKKEIRKRTKRKRKSVNKRELSGSIKTWIPTHSGSSVFSSLFRNCDDSKEMXDSIVDCLSEGEEIEEIKIVNLSDSSHGSSFESDEINEDKNMVDEEENDEELIDERSTNSAVRENFVRCYGKEKDEDASDVVIDFEQKPFSTHCDSVQNGLDAIQWLIDPYDLTQFFKMVFQKKVFLVCHNNPNYYGNLFSTAKFIDILQTDYVEYGTNVNVAIYKNQQRSTLNGSGKVYPQAIQKSIKAGCSIQLTNPQSFCDNVWYYCDLLQEVFGCFVGANIYITPANTAGFAPHWDDIDAFLLQLEGRKHWKIYAPDSDDEMLPRLPSGNFTDNDVINRMLVFDDWLEQGDMLYIPRGYIHQGFADKDVHSLHLTVSVCRNVTYADLLERVIPPALSNFAEQNVNIRKSLPARYLDMTGVLECDYPLLKTGTMKLHRFLDSIFSNFCKYIKELSEPAVDMMAREFMRTALPPVLTKEEKDMTALCVAGSSLYGDKEHIFTKNTSIKLLRRHGQRLIYESEERCFIVHRMANSRVYEGRPEVLFDLDVELAEGFANLVNAYPRWCLVSDLKCNDAADNIRLAELLYSNGLLMAEFREAMK</sequence>
<accession>A8QFQ3</accession>
<gene>
    <name type="ORF">Bm1_53875</name>
</gene>
<dbReference type="EC" id="1.14.11.-"/>
<dbReference type="EC" id="1.14.11.27"/>
<dbReference type="EMBL" id="DS239536">
    <property type="protein sequence ID" value="EDP28913.1"/>
    <property type="molecule type" value="Genomic_DNA"/>
</dbReference>
<dbReference type="RefSeq" id="XP_001902238.1">
    <property type="nucleotide sequence ID" value="XM_001902203.1"/>
</dbReference>
<dbReference type="FunCoup" id="A8QFQ3">
    <property type="interactions" value="1837"/>
</dbReference>
<dbReference type="STRING" id="6279.A8QFQ3"/>
<dbReference type="WormBase" id="Bm6073">
    <property type="protein sequence ID" value="BM43046"/>
    <property type="gene ID" value="WBGene00226334"/>
    <property type="gene designation" value="Bma-jmjc-1"/>
</dbReference>
<dbReference type="InParanoid" id="A8QFQ3"/>
<dbReference type="Proteomes" id="UP000006672">
    <property type="component" value="Unassembled WGS sequence"/>
</dbReference>
<dbReference type="GO" id="GO:0005730">
    <property type="term" value="C:nucleolus"/>
    <property type="evidence" value="ECO:0007669"/>
    <property type="project" value="TreeGrafter"/>
</dbReference>
<dbReference type="GO" id="GO:0005634">
    <property type="term" value="C:nucleus"/>
    <property type="evidence" value="ECO:0000250"/>
    <property type="project" value="UniProtKB"/>
</dbReference>
<dbReference type="GO" id="GO:0016706">
    <property type="term" value="F:2-oxoglutarate-dependent dioxygenase activity"/>
    <property type="evidence" value="ECO:0000250"/>
    <property type="project" value="UniProtKB"/>
</dbReference>
<dbReference type="GO" id="GO:0051864">
    <property type="term" value="F:histone H3K36 demethylase activity"/>
    <property type="evidence" value="ECO:0000250"/>
    <property type="project" value="UniProtKB"/>
</dbReference>
<dbReference type="GO" id="GO:0140680">
    <property type="term" value="F:histone H3K36me/H3K36me2 demethylase activity"/>
    <property type="evidence" value="ECO:0007669"/>
    <property type="project" value="UniProtKB-EC"/>
</dbReference>
<dbReference type="GO" id="GO:0034647">
    <property type="term" value="F:histone H3K4me/H3K4me2/H3K4me3 demethylase activity"/>
    <property type="evidence" value="ECO:0000250"/>
    <property type="project" value="UniProtKB"/>
</dbReference>
<dbReference type="GO" id="GO:0005506">
    <property type="term" value="F:iron ion binding"/>
    <property type="evidence" value="ECO:0000250"/>
    <property type="project" value="UniProtKB"/>
</dbReference>
<dbReference type="GO" id="GO:0045892">
    <property type="term" value="P:negative regulation of DNA-templated transcription"/>
    <property type="evidence" value="ECO:0000250"/>
    <property type="project" value="UniProtKB"/>
</dbReference>
<dbReference type="FunFam" id="2.60.120.650:FF:000013">
    <property type="entry name" value="Ribosomal oxygenase 1"/>
    <property type="match status" value="1"/>
</dbReference>
<dbReference type="FunFam" id="3.90.930.40:FF:000001">
    <property type="entry name" value="ribosomal oxygenase 1 isoform X1"/>
    <property type="match status" value="1"/>
</dbReference>
<dbReference type="Gene3D" id="3.90.930.40">
    <property type="match status" value="1"/>
</dbReference>
<dbReference type="Gene3D" id="2.60.120.650">
    <property type="entry name" value="Cupin"/>
    <property type="match status" value="1"/>
</dbReference>
<dbReference type="Gene3D" id="1.10.10.1500">
    <property type="entry name" value="JmjC domain-containing ribosomal oxygenase (ROX), dimer domain"/>
    <property type="match status" value="1"/>
</dbReference>
<dbReference type="InterPro" id="IPR003347">
    <property type="entry name" value="JmjC_dom"/>
</dbReference>
<dbReference type="InterPro" id="IPR039994">
    <property type="entry name" value="NO66-like"/>
</dbReference>
<dbReference type="InterPro" id="IPR049043">
    <property type="entry name" value="RIOX1/NO66-like_C_WH"/>
</dbReference>
<dbReference type="PANTHER" id="PTHR13096">
    <property type="entry name" value="MINA53 MYC INDUCED NUCLEAR ANTIGEN"/>
    <property type="match status" value="1"/>
</dbReference>
<dbReference type="PANTHER" id="PTHR13096:SF8">
    <property type="entry name" value="RIBOSOMAL OXYGENASE 1"/>
    <property type="match status" value="1"/>
</dbReference>
<dbReference type="Pfam" id="PF08007">
    <property type="entry name" value="JmjC_2"/>
    <property type="match status" value="1"/>
</dbReference>
<dbReference type="Pfam" id="PF21233">
    <property type="entry name" value="RIOX1_C_WH"/>
    <property type="match status" value="1"/>
</dbReference>
<dbReference type="SUPFAM" id="SSF51197">
    <property type="entry name" value="Clavaminate synthase-like"/>
    <property type="match status" value="1"/>
</dbReference>
<dbReference type="PROSITE" id="PS51184">
    <property type="entry name" value="JMJC"/>
    <property type="match status" value="1"/>
</dbReference>
<name>NO66_BRUMA</name>
<proteinExistence type="inferred from homology"/>
<keyword id="KW-0156">Chromatin regulator</keyword>
<keyword id="KW-0223">Dioxygenase</keyword>
<keyword id="KW-0408">Iron</keyword>
<keyword id="KW-0479">Metal-binding</keyword>
<keyword id="KW-0539">Nucleus</keyword>
<keyword id="KW-0560">Oxidoreductase</keyword>
<keyword id="KW-1185">Reference proteome</keyword>
<keyword id="KW-0678">Repressor</keyword>
<keyword id="KW-0804">Transcription</keyword>
<keyword id="KW-0805">Transcription regulation</keyword>
<reference key="1">
    <citation type="journal article" date="2007" name="Science">
        <title>Draft genome of the filarial nematode parasite Brugia malayi.</title>
        <authorList>
            <person name="Ghedin E."/>
            <person name="Wang S."/>
            <person name="Spiro D."/>
            <person name="Caler E."/>
            <person name="Zhao Q."/>
            <person name="Crabtree J."/>
            <person name="Allen J.E."/>
            <person name="Delcher A.L."/>
            <person name="Guiliano D.B."/>
            <person name="Miranda-Saavedra D."/>
            <person name="Angiuoli S.V."/>
            <person name="Creasy T."/>
            <person name="Amedeo P."/>
            <person name="Haas B."/>
            <person name="El-Sayed N.M."/>
            <person name="Wortman J.R."/>
            <person name="Feldblyum T."/>
            <person name="Tallon L."/>
            <person name="Schatz M."/>
            <person name="Shumway M."/>
            <person name="Koo H."/>
            <person name="Salzberg S.L."/>
            <person name="Schobel S."/>
            <person name="Pertea M."/>
            <person name="Pop M."/>
            <person name="White O."/>
            <person name="Barton G.J."/>
            <person name="Carlow C.K.S."/>
            <person name="Crawford M.J."/>
            <person name="Daub J."/>
            <person name="Dimmic M.W."/>
            <person name="Estes C.F."/>
            <person name="Foster J.M."/>
            <person name="Ganatra M."/>
            <person name="Gregory W.F."/>
            <person name="Johnson N.M."/>
            <person name="Jin J."/>
            <person name="Komuniecki R."/>
            <person name="Korf I."/>
            <person name="Kumar S."/>
            <person name="Laney S."/>
            <person name="Li B.-W."/>
            <person name="Li W."/>
            <person name="Lindblom T.H."/>
            <person name="Lustigman S."/>
            <person name="Ma D."/>
            <person name="Maina C.V."/>
            <person name="Martin D.M."/>
            <person name="McCarter J.P."/>
            <person name="McReynolds L."/>
            <person name="Mitreva M."/>
            <person name="Nutman T.B."/>
            <person name="Parkinson J."/>
            <person name="Peregrin-Alvarez J.M."/>
            <person name="Poole C."/>
            <person name="Ren Q."/>
            <person name="Saunders L."/>
            <person name="Sluder A.E."/>
            <person name="Smith K."/>
            <person name="Stanke M."/>
            <person name="Unnasch T.R."/>
            <person name="Ware J."/>
            <person name="Wei A.D."/>
            <person name="Weil G."/>
            <person name="Williams D.J."/>
            <person name="Zhang Y."/>
            <person name="Williams S.A."/>
            <person name="Fraser-Liggett C."/>
            <person name="Slatko B."/>
            <person name="Blaxter M.L."/>
            <person name="Scott A.L."/>
        </authorList>
    </citation>
    <scope>NUCLEOTIDE SEQUENCE [LARGE SCALE GENOMIC DNA]</scope>
</reference>
<protein>
    <recommendedName>
        <fullName>Bifunctional lysine-specific demethylase and histidyl-hydroxylase NO66</fullName>
        <ecNumber>1.14.11.-</ecNumber>
        <ecNumber>1.14.11.27</ecNumber>
    </recommendedName>
    <alternativeName>
        <fullName>Histone lysine demethylase NO66</fullName>
    </alternativeName>
</protein>
<organism>
    <name type="scientific">Brugia malayi</name>
    <name type="common">Filarial nematode worm</name>
    <dbReference type="NCBI Taxonomy" id="6279"/>
    <lineage>
        <taxon>Eukaryota</taxon>
        <taxon>Metazoa</taxon>
        <taxon>Ecdysozoa</taxon>
        <taxon>Nematoda</taxon>
        <taxon>Chromadorea</taxon>
        <taxon>Rhabditida</taxon>
        <taxon>Spirurina</taxon>
        <taxon>Spiruromorpha</taxon>
        <taxon>Filarioidea</taxon>
        <taxon>Onchocercidae</taxon>
        <taxon>Brugia</taxon>
    </lineage>
</organism>
<comment type="function">
    <text evidence="1">Oxygenase that can act as both a histone lysine demethylase and a ribosomal histidine hydroxylase. Specifically demethylates 'Lys-4' (H3K4me) and 'Lys-36' (H3K36me) of histone H3, thereby playing a central role in histone code (By similarity).</text>
</comment>
<comment type="catalytic activity">
    <reaction>
        <text>N(6),N(6)-dimethyl-L-lysyl(36)-[histone H3] + 2 2-oxoglutarate + 2 O2 = L-lysyl(36)-[histone H3] + 2 formaldehyde + 2 succinate + 2 CO2</text>
        <dbReference type="Rhea" id="RHEA:42032"/>
        <dbReference type="Rhea" id="RHEA-COMP:9785"/>
        <dbReference type="Rhea" id="RHEA-COMP:9787"/>
        <dbReference type="ChEBI" id="CHEBI:15379"/>
        <dbReference type="ChEBI" id="CHEBI:16526"/>
        <dbReference type="ChEBI" id="CHEBI:16810"/>
        <dbReference type="ChEBI" id="CHEBI:16842"/>
        <dbReference type="ChEBI" id="CHEBI:29969"/>
        <dbReference type="ChEBI" id="CHEBI:30031"/>
        <dbReference type="ChEBI" id="CHEBI:61976"/>
        <dbReference type="EC" id="1.14.11.27"/>
    </reaction>
</comment>
<comment type="cofactor">
    <cofactor evidence="1">
        <name>Fe(2+)</name>
        <dbReference type="ChEBI" id="CHEBI:29033"/>
    </cofactor>
    <text evidence="1">Binds 1 Fe(2+) ion per subunit.</text>
</comment>
<comment type="subcellular location">
    <subcellularLocation>
        <location evidence="1">Nucleus</location>
    </subcellularLocation>
</comment>
<comment type="similarity">
    <text evidence="4">Belongs to the ROX family. NO66 subfamily.</text>
</comment>
<feature type="chain" id="PRO_0000390979" description="Bifunctional lysine-specific demethylase and histidyl-hydroxylase NO66">
    <location>
        <begin position="1"/>
        <end position="710"/>
    </location>
</feature>
<feature type="domain" description="JmjC" evidence="2">
    <location>
        <begin position="359"/>
        <end position="506"/>
    </location>
</feature>
<feature type="region of interest" description="Disordered" evidence="3">
    <location>
        <begin position="103"/>
        <end position="137"/>
    </location>
</feature>
<feature type="compositionally biased region" description="Basic residues" evidence="3">
    <location>
        <begin position="109"/>
        <end position="132"/>
    </location>
</feature>
<feature type="binding site" evidence="2">
    <location>
        <position position="405"/>
    </location>
    <ligand>
        <name>Fe cation</name>
        <dbReference type="ChEBI" id="CHEBI:24875"/>
        <note>catalytic</note>
    </ligand>
</feature>
<feature type="binding site" evidence="2">
    <location>
        <position position="407"/>
    </location>
    <ligand>
        <name>Fe cation</name>
        <dbReference type="ChEBI" id="CHEBI:24875"/>
        <note>catalytic</note>
    </ligand>
</feature>
<feature type="binding site" evidence="2">
    <location>
        <position position="472"/>
    </location>
    <ligand>
        <name>Fe cation</name>
        <dbReference type="ChEBI" id="CHEBI:24875"/>
        <note>catalytic</note>
    </ligand>
</feature>
<evidence type="ECO:0000250" key="1"/>
<evidence type="ECO:0000255" key="2">
    <source>
        <dbReference type="PROSITE-ProRule" id="PRU00538"/>
    </source>
</evidence>
<evidence type="ECO:0000256" key="3">
    <source>
        <dbReference type="SAM" id="MobiDB-lite"/>
    </source>
</evidence>
<evidence type="ECO:0000305" key="4"/>